<name>FEMA_STAEP</name>
<feature type="chain" id="PRO_0000232602" description="Aminoacyltransferase FemA">
    <location>
        <begin position="1"/>
        <end position="417"/>
    </location>
</feature>
<reference key="1">
    <citation type="journal article" date="1996" name="Gene">
        <title>Cloning and characterization of femA and femB from Staphylococcus epidermidis.</title>
        <authorList>
            <person name="Alborn W.E. Jr."/>
            <person name="Hoskins J."/>
            <person name="Uenal S."/>
            <person name="Flokowitsch J.E."/>
            <person name="Hayes C.A."/>
            <person name="Dotzlaf J.E."/>
            <person name="Yeh W.K."/>
            <person name="Skatrud P.L."/>
        </authorList>
    </citation>
    <scope>NUCLEOTIDE SEQUENCE [GENOMIC DNA]</scope>
    <source>
        <strain>ST335</strain>
    </source>
</reference>
<gene>
    <name type="primary">femA</name>
</gene>
<dbReference type="EC" id="2.3.2.17"/>
<dbReference type="EMBL" id="U23713">
    <property type="protein sequence ID" value="AAB41947.1"/>
    <property type="status" value="ALT_INIT"/>
    <property type="molecule type" value="Genomic_DNA"/>
</dbReference>
<dbReference type="PIR" id="JC5325">
    <property type="entry name" value="JC5325"/>
</dbReference>
<dbReference type="SMR" id="P95734"/>
<dbReference type="BRENDA" id="2.3.2.17">
    <property type="organism ID" value="5875"/>
</dbReference>
<dbReference type="GO" id="GO:0005737">
    <property type="term" value="C:cytoplasm"/>
    <property type="evidence" value="ECO:0007669"/>
    <property type="project" value="UniProtKB-SubCell"/>
</dbReference>
<dbReference type="GO" id="GO:0016755">
    <property type="term" value="F:aminoacyltransferase activity"/>
    <property type="evidence" value="ECO:0007669"/>
    <property type="project" value="InterPro"/>
</dbReference>
<dbReference type="GO" id="GO:0000166">
    <property type="term" value="F:nucleotide binding"/>
    <property type="evidence" value="ECO:0007669"/>
    <property type="project" value="InterPro"/>
</dbReference>
<dbReference type="GO" id="GO:0071555">
    <property type="term" value="P:cell wall organization"/>
    <property type="evidence" value="ECO:0007669"/>
    <property type="project" value="UniProtKB-KW"/>
</dbReference>
<dbReference type="GO" id="GO:0009252">
    <property type="term" value="P:peptidoglycan biosynthetic process"/>
    <property type="evidence" value="ECO:0007669"/>
    <property type="project" value="UniProtKB-KW"/>
</dbReference>
<dbReference type="GO" id="GO:0008360">
    <property type="term" value="P:regulation of cell shape"/>
    <property type="evidence" value="ECO:0007669"/>
    <property type="project" value="UniProtKB-KW"/>
</dbReference>
<dbReference type="Gene3D" id="1.20.58.90">
    <property type="match status" value="1"/>
</dbReference>
<dbReference type="Gene3D" id="3.40.630.30">
    <property type="match status" value="2"/>
</dbReference>
<dbReference type="InterPro" id="IPR016181">
    <property type="entry name" value="Acyl_CoA_acyltransferase"/>
</dbReference>
<dbReference type="InterPro" id="IPR003447">
    <property type="entry name" value="FEMABX"/>
</dbReference>
<dbReference type="InterPro" id="IPR050644">
    <property type="entry name" value="PG_Glycine_Bridge_Synth"/>
</dbReference>
<dbReference type="InterPro" id="IPR010978">
    <property type="entry name" value="tRNA-bd_arm"/>
</dbReference>
<dbReference type="PANTHER" id="PTHR36174:SF2">
    <property type="entry name" value="AMINOACYLTRANSFERASE FEMA"/>
    <property type="match status" value="1"/>
</dbReference>
<dbReference type="PANTHER" id="PTHR36174">
    <property type="entry name" value="LIPID II:GLYCINE GLYCYLTRANSFERASE"/>
    <property type="match status" value="1"/>
</dbReference>
<dbReference type="Pfam" id="PF02388">
    <property type="entry name" value="FemAB"/>
    <property type="match status" value="1"/>
</dbReference>
<dbReference type="SUPFAM" id="SSF55729">
    <property type="entry name" value="Acyl-CoA N-acyltransferases (Nat)"/>
    <property type="match status" value="2"/>
</dbReference>
<dbReference type="SUPFAM" id="SSF46589">
    <property type="entry name" value="tRNA-binding arm"/>
    <property type="match status" value="1"/>
</dbReference>
<dbReference type="PROSITE" id="PS51191">
    <property type="entry name" value="FEMABX"/>
    <property type="match status" value="1"/>
</dbReference>
<proteinExistence type="inferred from homology"/>
<comment type="function">
    <text evidence="1">Catalyzes the incorporation of amino acid(s) into the interchain peptide bridge of peptidoglycan, using aminoacyl-tRNA as amino acid donor.</text>
</comment>
<comment type="catalytic activity">
    <reaction>
        <text>beta-D-GlcNAc-(1-&gt;4)-Mur2Ac(oyl-L-Ala-D-isoglutaminyl-L-Lys-(N(6)-Gly)-D-Ala-D-Ala)-di-trans,octa-cis-undecaprenyl diphosphate + 2 glycyl-tRNA(Gly) = MurNAc-L-Ala-D-isoglutaminyl-L-Lys-(N(6)-tri-Gly)-D-Ala-D-Ala-diphospho-di-trans,octa-cis-undecaprenyl-GlcNAc + 2 tRNA(Gly) + 2 H(+)</text>
        <dbReference type="Rhea" id="RHEA:30439"/>
        <dbReference type="Rhea" id="RHEA-COMP:9664"/>
        <dbReference type="Rhea" id="RHEA-COMP:9683"/>
        <dbReference type="ChEBI" id="CHEBI:15378"/>
        <dbReference type="ChEBI" id="CHEBI:62234"/>
        <dbReference type="ChEBI" id="CHEBI:62235"/>
        <dbReference type="ChEBI" id="CHEBI:78442"/>
        <dbReference type="ChEBI" id="CHEBI:78522"/>
        <dbReference type="EC" id="2.3.2.17"/>
    </reaction>
</comment>
<comment type="subcellular location">
    <subcellularLocation>
        <location evidence="1">Cytoplasm</location>
    </subcellularLocation>
</comment>
<comment type="similarity">
    <text evidence="2">Belongs to the FemABX family.</text>
</comment>
<comment type="sequence caution" evidence="2">
    <conflict type="erroneous initiation">
        <sequence resource="EMBL-CDS" id="AAB41947"/>
    </conflict>
</comment>
<keyword id="KW-0012">Acyltransferase</keyword>
<keyword id="KW-0133">Cell shape</keyword>
<keyword id="KW-0961">Cell wall biogenesis/degradation</keyword>
<keyword id="KW-0963">Cytoplasm</keyword>
<keyword id="KW-0573">Peptidoglycan synthesis</keyword>
<keyword id="KW-0808">Transferase</keyword>
<organism>
    <name type="scientific">Staphylococcus epidermidis</name>
    <dbReference type="NCBI Taxonomy" id="1282"/>
    <lineage>
        <taxon>Bacteria</taxon>
        <taxon>Bacillati</taxon>
        <taxon>Bacillota</taxon>
        <taxon>Bacilli</taxon>
        <taxon>Bacillales</taxon>
        <taxon>Staphylococcaceae</taxon>
        <taxon>Staphylococcus</taxon>
    </lineage>
</organism>
<sequence length="417" mass="48929">MKFANLTAKEFSDFTDRMTYSHFTQMEGNYELKVAEGTESHLVGIKNNDNEVIAACLLTAVPVMKIFKYFYSNRGPVIDYNNKELVHFFFNELSKYVKKYNCLYLRVDPYLPYQYLNHEGEITGNAGHDWIFDELESLGYKHEGFHKGFDPVLQIRYHSVLNLANKSANDVLKNMDGLRKRNTKKVKKNGVKVRFLSEEELPIFRSFMEDTSETKDFADREDSFYYNRFKHYKGRVLVPLAYINFDEYIEELNNERNVLNKDYNKALKDIEKRPENKKAHNKKENLEQQLDANQQKINEAKNLKQEHGNELPISAGFFIINPFEVVYYAGGTSNRYRHFAGSYAVQWKMINYAIEHGINRYNFYGISGDFSEDAEDAGVVKFKKGYDADVIEYVGDFIKPINKPMYNIYRTLKKLKK</sequence>
<protein>
    <recommendedName>
        <fullName>Aminoacyltransferase FemA</fullName>
        <ecNumber>2.3.2.17</ecNumber>
    </recommendedName>
    <alternativeName>
        <fullName>Factor essential for expression of methicillin resistance A</fullName>
    </alternativeName>
    <alternativeName>
        <fullName>N-acetylmuramoyl-L-alanyl-D-glutamyl-L-lysyl-(N6-glycyl)-D-alanyl-D-alanine-diphosphoundecaprenyl-N-acetylglucosamine:glycine glycyltransferase</fullName>
    </alternativeName>
</protein>
<evidence type="ECO:0000250" key="1"/>
<evidence type="ECO:0000305" key="2"/>
<accession>P95734</accession>